<name>EFTU_PROHO</name>
<reference key="1">
    <citation type="journal article" date="1995" name="Mol. Phylogenet. Evol.">
        <title>Phylogenetic analysis of tufA sequences indicates a cyanobacterial origin of all plastids.</title>
        <authorList>
            <person name="Delwiche C.F."/>
            <person name="Kuhsel M."/>
            <person name="Palmer J.D."/>
        </authorList>
    </citation>
    <scope>NUCLEOTIDE SEQUENCE [GENOMIC DNA]</scope>
</reference>
<gene>
    <name type="primary">tufA</name>
</gene>
<proteinExistence type="inferred from homology"/>
<sequence length="234" mass="25771">KNMITGAAQMDGAILVVSAADGPMPQTREHILLAKRVGVPNIVVFLNKQDMVDDDELLELVELEVRELLTEYGFDGDSIPIVAGSALQAVDAMIAKGTTKQSENEWVDKIHKLMAEVDAFIPTPERIIDKPFLMAIEDVFSITGRGTVATGRIERGKVKVGEIEIVGIRDNRQSIVTGVEMFRKLLDEGMAGDNVGVLLRGIQREDLERGMVLAKSRSITPHTKFESEVYVLKK</sequence>
<keyword id="KW-0963">Cytoplasm</keyword>
<keyword id="KW-0251">Elongation factor</keyword>
<keyword id="KW-0342">GTP-binding</keyword>
<keyword id="KW-0378">Hydrolase</keyword>
<keyword id="KW-0547">Nucleotide-binding</keyword>
<keyword id="KW-0648">Protein biosynthesis</keyword>
<accession>P50067</accession>
<dbReference type="EC" id="3.6.5.3" evidence="2"/>
<dbReference type="EMBL" id="U09445">
    <property type="protein sequence ID" value="AAA87699.1"/>
    <property type="molecule type" value="Genomic_DNA"/>
</dbReference>
<dbReference type="SMR" id="P50067"/>
<dbReference type="GO" id="GO:0005829">
    <property type="term" value="C:cytosol"/>
    <property type="evidence" value="ECO:0007669"/>
    <property type="project" value="TreeGrafter"/>
</dbReference>
<dbReference type="GO" id="GO:0005525">
    <property type="term" value="F:GTP binding"/>
    <property type="evidence" value="ECO:0007669"/>
    <property type="project" value="UniProtKB-KW"/>
</dbReference>
<dbReference type="GO" id="GO:0003924">
    <property type="term" value="F:GTPase activity"/>
    <property type="evidence" value="ECO:0007669"/>
    <property type="project" value="InterPro"/>
</dbReference>
<dbReference type="GO" id="GO:0003746">
    <property type="term" value="F:translation elongation factor activity"/>
    <property type="evidence" value="ECO:0007669"/>
    <property type="project" value="UniProtKB-KW"/>
</dbReference>
<dbReference type="CDD" id="cd03697">
    <property type="entry name" value="EFTU_II"/>
    <property type="match status" value="1"/>
</dbReference>
<dbReference type="FunFam" id="2.40.30.10:FF:000001">
    <property type="entry name" value="Elongation factor Tu"/>
    <property type="match status" value="1"/>
</dbReference>
<dbReference type="Gene3D" id="3.40.50.300">
    <property type="entry name" value="P-loop containing nucleotide triphosphate hydrolases"/>
    <property type="match status" value="1"/>
</dbReference>
<dbReference type="Gene3D" id="2.40.30.10">
    <property type="entry name" value="Translation factors"/>
    <property type="match status" value="1"/>
</dbReference>
<dbReference type="InterPro" id="IPR050055">
    <property type="entry name" value="EF-Tu_GTPase"/>
</dbReference>
<dbReference type="InterPro" id="IPR004161">
    <property type="entry name" value="EFTu-like_2"/>
</dbReference>
<dbReference type="InterPro" id="IPR033720">
    <property type="entry name" value="EFTU_2"/>
</dbReference>
<dbReference type="InterPro" id="IPR027417">
    <property type="entry name" value="P-loop_NTPase"/>
</dbReference>
<dbReference type="InterPro" id="IPR000795">
    <property type="entry name" value="T_Tr_GTP-bd_dom"/>
</dbReference>
<dbReference type="InterPro" id="IPR009000">
    <property type="entry name" value="Transl_B-barrel_sf"/>
</dbReference>
<dbReference type="PANTHER" id="PTHR43721:SF22">
    <property type="entry name" value="ELONGATION FACTOR TU, MITOCHONDRIAL"/>
    <property type="match status" value="1"/>
</dbReference>
<dbReference type="PANTHER" id="PTHR43721">
    <property type="entry name" value="ELONGATION FACTOR TU-RELATED"/>
    <property type="match status" value="1"/>
</dbReference>
<dbReference type="Pfam" id="PF00009">
    <property type="entry name" value="GTP_EFTU"/>
    <property type="match status" value="1"/>
</dbReference>
<dbReference type="Pfam" id="PF03144">
    <property type="entry name" value="GTP_EFTU_D2"/>
    <property type="match status" value="1"/>
</dbReference>
<dbReference type="PRINTS" id="PR00315">
    <property type="entry name" value="ELONGATNFCT"/>
</dbReference>
<dbReference type="SUPFAM" id="SSF52540">
    <property type="entry name" value="P-loop containing nucleoside triphosphate hydrolases"/>
    <property type="match status" value="1"/>
</dbReference>
<dbReference type="SUPFAM" id="SSF50447">
    <property type="entry name" value="Translation proteins"/>
    <property type="match status" value="1"/>
</dbReference>
<dbReference type="PROSITE" id="PS51722">
    <property type="entry name" value="G_TR_2"/>
    <property type="match status" value="1"/>
</dbReference>
<organism>
    <name type="scientific">Prochlorothrix hollandica</name>
    <dbReference type="NCBI Taxonomy" id="1223"/>
    <lineage>
        <taxon>Bacteria</taxon>
        <taxon>Bacillati</taxon>
        <taxon>Cyanobacteriota</taxon>
        <taxon>Cyanophyceae</taxon>
        <taxon>Prochlorotrichales</taxon>
        <taxon>Prochlorotrichaceae</taxon>
        <taxon>Prochlorothrix</taxon>
    </lineage>
</organism>
<feature type="chain" id="PRO_0000091364" description="Elongation factor Tu">
    <location>
        <begin position="1" status="less than"/>
        <end position="234" status="greater than"/>
    </location>
</feature>
<feature type="domain" description="tr-type G" evidence="3">
    <location>
        <begin position="1" status="less than"/>
        <end position="125"/>
    </location>
</feature>
<feature type="binding site" evidence="1">
    <location>
        <begin position="47"/>
        <end position="50"/>
    </location>
    <ligand>
        <name>GTP</name>
        <dbReference type="ChEBI" id="CHEBI:37565"/>
    </ligand>
</feature>
<feature type="non-terminal residue">
    <location>
        <position position="1"/>
    </location>
</feature>
<feature type="non-terminal residue">
    <location>
        <position position="234"/>
    </location>
</feature>
<protein>
    <recommendedName>
        <fullName>Elongation factor Tu</fullName>
        <shortName>EF-Tu</shortName>
        <ecNumber evidence="2">3.6.5.3</ecNumber>
    </recommendedName>
</protein>
<evidence type="ECO:0000250" key="1"/>
<evidence type="ECO:0000255" key="2">
    <source>
        <dbReference type="HAMAP-Rule" id="MF_00118"/>
    </source>
</evidence>
<evidence type="ECO:0000255" key="3">
    <source>
        <dbReference type="PROSITE-ProRule" id="PRU01059"/>
    </source>
</evidence>
<comment type="function">
    <text evidence="2">GTP hydrolase that promotes the GTP-dependent binding of aminoacyl-tRNA to the A-site of ribosomes during protein biosynthesis.</text>
</comment>
<comment type="catalytic activity">
    <reaction evidence="2">
        <text>GTP + H2O = GDP + phosphate + H(+)</text>
        <dbReference type="Rhea" id="RHEA:19669"/>
        <dbReference type="ChEBI" id="CHEBI:15377"/>
        <dbReference type="ChEBI" id="CHEBI:15378"/>
        <dbReference type="ChEBI" id="CHEBI:37565"/>
        <dbReference type="ChEBI" id="CHEBI:43474"/>
        <dbReference type="ChEBI" id="CHEBI:58189"/>
        <dbReference type="EC" id="3.6.5.3"/>
    </reaction>
    <physiologicalReaction direction="left-to-right" evidence="2">
        <dbReference type="Rhea" id="RHEA:19670"/>
    </physiologicalReaction>
</comment>
<comment type="subunit">
    <text evidence="1">Monomer.</text>
</comment>
<comment type="subcellular location">
    <subcellularLocation>
        <location evidence="1">Cytoplasm</location>
    </subcellularLocation>
</comment>
<comment type="similarity">
    <text evidence="3">Belongs to the TRAFAC class translation factor GTPase superfamily. Classic translation factor GTPase family. EF-Tu/EF-1A subfamily.</text>
</comment>